<sequence>MSANAAWDDSDSENENVVVEEKPVILPRARQPSIAKSLEKVQILENSVAGSEKNASDDDSDASSVMSDDLESLGETTEVLNFSLEQLSMMKKNLAQFPCSYKNIISEFADVEIFLISIDSLIVECAAHSYHNWDVAGQSMVLNKQIDRFLQQFVDIGGRFKLVVFSDLTTQFAKDTTLSFARSTALAHLANGPHARDLLFFTNPTDPEWDKLLNDLTPSFLMISTDNVTQNVCASQEIDLTKQFETIAFDVLTRSMSVVLLHSIKVNFVSVEAYYIQPLLVVAPDWQAFLAAHWDNNGTLLRNHLSKEIKFNQFETPADLWVKVITDAKATGKGSDTFDTLAAAVILSSLICSRRGAHRIYYPTRTDAKRGLNVIRDRRLILNAAVVLLDKADHANSKLDLSDLWDGRMVYSIFDELSANETVLPYRLQDDFAKYHQKAGLTVPLATDTNEKLFDPIPEITDPLVDLPILYSVTSPMIKRFVPEIEKMTSQNAVEEGTVQDYADYLKDTSQWRLKPIEETYAQKEEKIEDAWQLKKANRSKQFLMRWYELFANSLEGRGSNLLVDFSRVPKGYAVVEEEVTDEKKTGKGGWSGQKQQKPGAGGKKGATKESGKSKKDLILEANKKAKDQKVAESEKVKIKYGCQQGKESVIFLNNLYSSLDLPETRALCVYEIAVREGRTIFDQHQGTDKQEVRRNAAIDLVGHLKDCFVKHWDHLESKQKEQIVDLWVSLGFEAPAGSKPSSEAKQKKLNLGINMVYYQLQYGGELIDIQSDPKKDDRVSGFAPDGWQRKMLDSVDRGNSALIIAPTSAGKTFVSYYCIEKVLRSSDNDVVVYVAPSKALINQVCGSVYARFRNKSMKRGISLFGTLTQEYSQNAMQCQVLITVPECLQELMLSRTPAVQKFVSHIKYVVFDEVHSIGASEESHIWEQLLLLIQCPFLALSATIGNANKLHEWLNSSEQAKSAGKRKVELINYGERYSELELSILNINDPHGEDDGAVHKKAGERAVIPLMPYGVYMPEKLRMFSIPEDQQLTARQVLHLYNMMAEVDDATKKEFEPCKFFGQHGTKAVWISRSELRRLENALKERFMEWLSSDEQKINSILKILKEPVNTQLSYRARPFNKEKIANDYIVTLVDDLKEKGELPAICFNDDRHVCEKLAVTLANELERRELEYMETDEFKNKYMIKDESKLVKLAKRKRDDAEKKKKGDKDEDAGPEKDDDEMDVLAMKKAKLARALERFKLRGRNGGDPDIYAKMVERMQKGAKTRESTQVLLKLFERGIGYHHAGLNTVERGAVEVLFRSGNLAVLFSTSTLSLGVNMPCKTVMFGVDTLQLTPLLYRQMSGRAGRRGFDHSGNVIFMSIPTSKVRRLLTASLSNLQGNPPFTVLFLLRLFAYVHQQDILNEEGQKVSTMKQRAFAAKSLLEHSFSIHTRREAQDGILQKQLRMFSAFSFQLLRHLQLLSPFGEGKNFAEMAIHSSSGANGTLLFIYLMQKKCFHQLIKSYDTAEQAQLGILEVLANLFTNLRMTPFHERSDNLENVQVTLRGLPSLLKPYVEEYNSTVTGLYKRFMAASSQDGNLFDPSFAVSGKLDSESVSLTEDFLVAPLFDQYSHDESFLPVIDFNKKDHRGRKIQRNAFAYDFYVHGSRNMLMDVNGLHVSVAWFLLHDFAAILERLAIGVHNMARPQDPLVLVLEELHKNYDEKFRKAFGMRTRD</sequence>
<evidence type="ECO:0000255" key="1">
    <source>
        <dbReference type="PROSITE-ProRule" id="PRU00541"/>
    </source>
</evidence>
<evidence type="ECO:0000255" key="2">
    <source>
        <dbReference type="PROSITE-ProRule" id="PRU00542"/>
    </source>
</evidence>
<evidence type="ECO:0000256" key="3">
    <source>
        <dbReference type="SAM" id="MobiDB-lite"/>
    </source>
</evidence>
<evidence type="ECO:0000305" key="4"/>
<name>YP93_CAEEL</name>
<protein>
    <recommendedName>
        <fullName>Uncharacterized helicase C28H8.3</fullName>
        <ecNumber>3.6.4.-</ecNumber>
    </recommendedName>
</protein>
<proteinExistence type="inferred from homology"/>
<accession>Q09475</accession>
<organism>
    <name type="scientific">Caenorhabditis elegans</name>
    <dbReference type="NCBI Taxonomy" id="6239"/>
    <lineage>
        <taxon>Eukaryota</taxon>
        <taxon>Metazoa</taxon>
        <taxon>Ecdysozoa</taxon>
        <taxon>Nematoda</taxon>
        <taxon>Chromadorea</taxon>
        <taxon>Rhabditida</taxon>
        <taxon>Rhabditina</taxon>
        <taxon>Rhabditomorpha</taxon>
        <taxon>Rhabditoidea</taxon>
        <taxon>Rhabditidae</taxon>
        <taxon>Peloderinae</taxon>
        <taxon>Caenorhabditis</taxon>
    </lineage>
</organism>
<dbReference type="EC" id="3.6.4.-"/>
<dbReference type="EMBL" id="FO080703">
    <property type="protein sequence ID" value="CCD65963.1"/>
    <property type="molecule type" value="Genomic_DNA"/>
</dbReference>
<dbReference type="PIR" id="A88470">
    <property type="entry name" value="A88470"/>
</dbReference>
<dbReference type="RefSeq" id="NP_498283.1">
    <property type="nucleotide sequence ID" value="NM_065882.6"/>
</dbReference>
<dbReference type="BioGRID" id="41056">
    <property type="interactions" value="8"/>
</dbReference>
<dbReference type="FunCoup" id="Q09475">
    <property type="interactions" value="238"/>
</dbReference>
<dbReference type="STRING" id="6239.C28H8.3.1"/>
<dbReference type="iPTMnet" id="Q09475"/>
<dbReference type="PaxDb" id="6239-C28H8.3"/>
<dbReference type="PeptideAtlas" id="Q09475"/>
<dbReference type="EnsemblMetazoa" id="C28H8.3.1">
    <property type="protein sequence ID" value="C28H8.3.1"/>
    <property type="gene ID" value="WBGene00016194"/>
</dbReference>
<dbReference type="GeneID" id="175834"/>
<dbReference type="KEGG" id="cel:CELE_C28H8.3"/>
<dbReference type="UCSC" id="C28H8.3.1">
    <property type="organism name" value="c. elegans"/>
</dbReference>
<dbReference type="AGR" id="WB:WBGene00016194"/>
<dbReference type="CTD" id="175834"/>
<dbReference type="WormBase" id="C28H8.3">
    <property type="protein sequence ID" value="CE29195"/>
    <property type="gene ID" value="WBGene00016194"/>
</dbReference>
<dbReference type="eggNOG" id="KOG0949">
    <property type="taxonomic scope" value="Eukaryota"/>
</dbReference>
<dbReference type="HOGENOM" id="CLU_002305_0_0_1"/>
<dbReference type="InParanoid" id="Q09475"/>
<dbReference type="OMA" id="EVHCISA"/>
<dbReference type="OrthoDB" id="64767at2759"/>
<dbReference type="PhylomeDB" id="Q09475"/>
<dbReference type="PRO" id="PR:Q09475"/>
<dbReference type="Proteomes" id="UP000001940">
    <property type="component" value="Chromosome III"/>
</dbReference>
<dbReference type="Bgee" id="WBGene00016194">
    <property type="expression patterns" value="Expressed in larva and 4 other cell types or tissues"/>
</dbReference>
<dbReference type="GO" id="GO:0005737">
    <property type="term" value="C:cytoplasm"/>
    <property type="evidence" value="ECO:0000318"/>
    <property type="project" value="GO_Central"/>
</dbReference>
<dbReference type="GO" id="GO:0005634">
    <property type="term" value="C:nucleus"/>
    <property type="evidence" value="ECO:0007669"/>
    <property type="project" value="UniProtKB-SubCell"/>
</dbReference>
<dbReference type="GO" id="GO:0005524">
    <property type="term" value="F:ATP binding"/>
    <property type="evidence" value="ECO:0007669"/>
    <property type="project" value="UniProtKB-KW"/>
</dbReference>
<dbReference type="GO" id="GO:0004386">
    <property type="term" value="F:helicase activity"/>
    <property type="evidence" value="ECO:0007669"/>
    <property type="project" value="UniProtKB-KW"/>
</dbReference>
<dbReference type="GO" id="GO:0016787">
    <property type="term" value="F:hydrolase activity"/>
    <property type="evidence" value="ECO:0007669"/>
    <property type="project" value="UniProtKB-KW"/>
</dbReference>
<dbReference type="GO" id="GO:0003676">
    <property type="term" value="F:nucleic acid binding"/>
    <property type="evidence" value="ECO:0007669"/>
    <property type="project" value="InterPro"/>
</dbReference>
<dbReference type="CDD" id="cd18025">
    <property type="entry name" value="DEXHc_DDX60"/>
    <property type="match status" value="1"/>
</dbReference>
<dbReference type="CDD" id="cd18795">
    <property type="entry name" value="SF2_C_Ski2"/>
    <property type="match status" value="1"/>
</dbReference>
<dbReference type="FunFam" id="3.40.50.300:FF:001039">
    <property type="entry name" value="ATP-dependent RNA helicase DDX60"/>
    <property type="match status" value="1"/>
</dbReference>
<dbReference type="Gene3D" id="3.40.50.300">
    <property type="entry name" value="P-loop containing nucleotide triphosphate hydrolases"/>
    <property type="match status" value="2"/>
</dbReference>
<dbReference type="InterPro" id="IPR011545">
    <property type="entry name" value="DEAD/DEAH_box_helicase_dom"/>
</dbReference>
<dbReference type="InterPro" id="IPR014001">
    <property type="entry name" value="Helicase_ATP-bd"/>
</dbReference>
<dbReference type="InterPro" id="IPR001650">
    <property type="entry name" value="Helicase_C-like"/>
</dbReference>
<dbReference type="InterPro" id="IPR027417">
    <property type="entry name" value="P-loop_NTPase"/>
</dbReference>
<dbReference type="InterPro" id="IPR055124">
    <property type="entry name" value="PIN-like_DDX60"/>
</dbReference>
<dbReference type="InterPro" id="IPR052431">
    <property type="entry name" value="SKI2_subfamily_helicases"/>
</dbReference>
<dbReference type="PANTHER" id="PTHR44533">
    <property type="entry name" value="DEAD/H RNA HELICASE, PUTATIVE-RELATED"/>
    <property type="match status" value="1"/>
</dbReference>
<dbReference type="PANTHER" id="PTHR44533:SF4">
    <property type="entry name" value="DEAD_H RNA HELICASE, PUTATIVE-RELATED"/>
    <property type="match status" value="1"/>
</dbReference>
<dbReference type="Pfam" id="PF00270">
    <property type="entry name" value="DEAD"/>
    <property type="match status" value="1"/>
</dbReference>
<dbReference type="Pfam" id="PF00271">
    <property type="entry name" value="Helicase_C"/>
    <property type="match status" value="1"/>
</dbReference>
<dbReference type="Pfam" id="PF23002">
    <property type="entry name" value="PIN-like_DDX60"/>
    <property type="match status" value="1"/>
</dbReference>
<dbReference type="SMART" id="SM00487">
    <property type="entry name" value="DEXDc"/>
    <property type="match status" value="1"/>
</dbReference>
<dbReference type="SMART" id="SM00490">
    <property type="entry name" value="HELICc"/>
    <property type="match status" value="1"/>
</dbReference>
<dbReference type="SUPFAM" id="SSF52540">
    <property type="entry name" value="P-loop containing nucleoside triphosphate hydrolases"/>
    <property type="match status" value="1"/>
</dbReference>
<dbReference type="PROSITE" id="PS51192">
    <property type="entry name" value="HELICASE_ATP_BIND_1"/>
    <property type="match status" value="1"/>
</dbReference>
<dbReference type="PROSITE" id="PS51194">
    <property type="entry name" value="HELICASE_CTER"/>
    <property type="match status" value="1"/>
</dbReference>
<keyword id="KW-0067">ATP-binding</keyword>
<keyword id="KW-0347">Helicase</keyword>
<keyword id="KW-0378">Hydrolase</keyword>
<keyword id="KW-0547">Nucleotide-binding</keyword>
<keyword id="KW-0539">Nucleus</keyword>
<keyword id="KW-1185">Reference proteome</keyword>
<reference key="1">
    <citation type="journal article" date="1998" name="Science">
        <title>Genome sequence of the nematode C. elegans: a platform for investigating biology.</title>
        <authorList>
            <consortium name="The C. elegans sequencing consortium"/>
        </authorList>
    </citation>
    <scope>NUCLEOTIDE SEQUENCE [LARGE SCALE GENOMIC DNA]</scope>
    <source>
        <strain>Bristol N2</strain>
    </source>
</reference>
<feature type="chain" id="PRO_0000102096" description="Uncharacterized helicase C28H8.3">
    <location>
        <begin position="1"/>
        <end position="1714"/>
    </location>
</feature>
<feature type="domain" description="Helicase ATP-binding" evidence="1">
    <location>
        <begin position="793"/>
        <end position="963"/>
    </location>
</feature>
<feature type="domain" description="Helicase C-terminal" evidence="2">
    <location>
        <begin position="1237"/>
        <end position="1391"/>
    </location>
</feature>
<feature type="region of interest" description="Disordered" evidence="3">
    <location>
        <begin position="47"/>
        <end position="70"/>
    </location>
</feature>
<feature type="region of interest" description="Disordered" evidence="3">
    <location>
        <begin position="584"/>
        <end position="616"/>
    </location>
</feature>
<feature type="region of interest" description="Disordered" evidence="3">
    <location>
        <begin position="1197"/>
        <end position="1223"/>
    </location>
</feature>
<feature type="short sequence motif" description="DEVH box">
    <location>
        <begin position="913"/>
        <end position="916"/>
    </location>
</feature>
<feature type="compositionally biased region" description="Basic and acidic residues" evidence="3">
    <location>
        <begin position="607"/>
        <end position="616"/>
    </location>
</feature>
<feature type="compositionally biased region" description="Basic and acidic residues" evidence="3">
    <location>
        <begin position="1199"/>
        <end position="1218"/>
    </location>
</feature>
<feature type="binding site" evidence="1">
    <location>
        <begin position="607"/>
        <end position="614"/>
    </location>
    <ligand>
        <name>ATP</name>
        <dbReference type="ChEBI" id="CHEBI:30616"/>
    </ligand>
</feature>
<feature type="binding site" evidence="1">
    <location>
        <begin position="806"/>
        <end position="813"/>
    </location>
    <ligand>
        <name>ATP</name>
        <dbReference type="ChEBI" id="CHEBI:30616"/>
    </ligand>
</feature>
<gene>
    <name type="ORF">C28H8.3</name>
</gene>
<comment type="subcellular location">
    <subcellularLocation>
        <location evidence="4">Nucleus</location>
    </subcellularLocation>
</comment>
<comment type="similarity">
    <text evidence="4">Belongs to the helicase family. SKI2 subfamily.</text>
</comment>